<protein>
    <recommendedName>
        <fullName evidence="4">Mannose-1-phosphate guanylyltransferase</fullName>
        <ecNumber evidence="1 2">2.7.7.13</ecNumber>
    </recommendedName>
    <alternativeName>
        <fullName evidence="4">GDP-mannose pyrophosphorylase</fullName>
        <shortName evidence="5">GMP</shortName>
        <shortName evidence="5">GMPP</shortName>
    </alternativeName>
</protein>
<dbReference type="EC" id="2.7.7.13" evidence="1 2"/>
<dbReference type="EMBL" id="AL123456">
    <property type="protein sequence ID" value="CCP46083.1"/>
    <property type="molecule type" value="Genomic_DNA"/>
</dbReference>
<dbReference type="RefSeq" id="WP_003417097.1">
    <property type="nucleotide sequence ID" value="NZ_NVQJ01000003.1"/>
</dbReference>
<dbReference type="RefSeq" id="YP_177951.1">
    <property type="nucleotide sequence ID" value="NC_000962.3"/>
</dbReference>
<dbReference type="SMR" id="L7N6A5"/>
<dbReference type="FunCoup" id="L7N6A5">
    <property type="interactions" value="510"/>
</dbReference>
<dbReference type="STRING" id="83332.Rv3264c"/>
<dbReference type="PaxDb" id="83332-Rv3264c"/>
<dbReference type="DNASU" id="888715"/>
<dbReference type="GeneID" id="888715"/>
<dbReference type="KEGG" id="mtu:Rv3264c"/>
<dbReference type="KEGG" id="mtv:RVBD_3264c"/>
<dbReference type="PATRIC" id="fig|83332.111.peg.3646"/>
<dbReference type="TubercuList" id="Rv3264c"/>
<dbReference type="eggNOG" id="COG1208">
    <property type="taxonomic scope" value="Bacteria"/>
</dbReference>
<dbReference type="InParanoid" id="L7N6A5"/>
<dbReference type="OrthoDB" id="9801810at2"/>
<dbReference type="PhylomeDB" id="L7N6A5"/>
<dbReference type="UniPathway" id="UPA00126">
    <property type="reaction ID" value="UER00930"/>
</dbReference>
<dbReference type="Proteomes" id="UP000001584">
    <property type="component" value="Chromosome"/>
</dbReference>
<dbReference type="GO" id="GO:0005737">
    <property type="term" value="C:cytoplasm"/>
    <property type="evidence" value="ECO:0000318"/>
    <property type="project" value="GO_Central"/>
</dbReference>
<dbReference type="GO" id="GO:0005525">
    <property type="term" value="F:GTP binding"/>
    <property type="evidence" value="ECO:0007669"/>
    <property type="project" value="UniProtKB-KW"/>
</dbReference>
<dbReference type="GO" id="GO:0016779">
    <property type="term" value="F:nucleotidyltransferase activity"/>
    <property type="evidence" value="ECO:0000318"/>
    <property type="project" value="GO_Central"/>
</dbReference>
<dbReference type="GO" id="GO:0071555">
    <property type="term" value="P:cell wall organization"/>
    <property type="evidence" value="ECO:0007669"/>
    <property type="project" value="UniProtKB-KW"/>
</dbReference>
<dbReference type="GO" id="GO:0009298">
    <property type="term" value="P:GDP-mannose biosynthetic process"/>
    <property type="evidence" value="ECO:0007669"/>
    <property type="project" value="UniProtKB-UniPathway"/>
</dbReference>
<dbReference type="CDD" id="cd04181">
    <property type="entry name" value="NTP_transferase"/>
    <property type="match status" value="1"/>
</dbReference>
<dbReference type="FunFam" id="3.90.550.10:FF:000215">
    <property type="entry name" value="D-alpha-D-mannose-1-phosphate guanylyltransferase ManB"/>
    <property type="match status" value="1"/>
</dbReference>
<dbReference type="FunFam" id="2.160.10.10:FF:000024">
    <property type="entry name" value="GDP-mannose pyrophosphorylase"/>
    <property type="match status" value="1"/>
</dbReference>
<dbReference type="Gene3D" id="2.160.10.10">
    <property type="entry name" value="Hexapeptide repeat proteins"/>
    <property type="match status" value="1"/>
</dbReference>
<dbReference type="Gene3D" id="3.90.550.10">
    <property type="entry name" value="Spore Coat Polysaccharide Biosynthesis Protein SpsA, Chain A"/>
    <property type="match status" value="1"/>
</dbReference>
<dbReference type="InterPro" id="IPR050486">
    <property type="entry name" value="Mannose-1P_guanyltransferase"/>
</dbReference>
<dbReference type="InterPro" id="IPR005835">
    <property type="entry name" value="NTP_transferase_dom"/>
</dbReference>
<dbReference type="InterPro" id="IPR029044">
    <property type="entry name" value="Nucleotide-diphossugar_trans"/>
</dbReference>
<dbReference type="PANTHER" id="PTHR22572">
    <property type="entry name" value="SUGAR-1-PHOSPHATE GUANYL TRANSFERASE"/>
    <property type="match status" value="1"/>
</dbReference>
<dbReference type="Pfam" id="PF00483">
    <property type="entry name" value="NTP_transferase"/>
    <property type="match status" value="1"/>
</dbReference>
<dbReference type="SUPFAM" id="SSF53448">
    <property type="entry name" value="Nucleotide-diphospho-sugar transferases"/>
    <property type="match status" value="1"/>
</dbReference>
<comment type="function">
    <text evidence="1 2">Catalyzes the formation of GDP-mannose from D-mannose-1-phosphate and GTP (PubMed:11302803, PubMed:34644596). Plays an important role in the synthesis of different glycoconjugates which are responsible for cell wall structure, virulence and immunomodulatory activity of M.tuberculosis (PubMed:34644596).</text>
</comment>
<comment type="catalytic activity">
    <reaction evidence="1 2">
        <text>alpha-D-mannose 1-phosphate + GTP + H(+) = GDP-alpha-D-mannose + diphosphate</text>
        <dbReference type="Rhea" id="RHEA:15229"/>
        <dbReference type="ChEBI" id="CHEBI:15378"/>
        <dbReference type="ChEBI" id="CHEBI:33019"/>
        <dbReference type="ChEBI" id="CHEBI:37565"/>
        <dbReference type="ChEBI" id="CHEBI:57527"/>
        <dbReference type="ChEBI" id="CHEBI:58409"/>
        <dbReference type="EC" id="2.7.7.13"/>
    </reaction>
    <physiologicalReaction direction="left-to-right" evidence="2">
        <dbReference type="Rhea" id="RHEA:15230"/>
    </physiologicalReaction>
</comment>
<comment type="biophysicochemical properties">
    <kinetics>
        <KM evidence="2">52.62 uM for mannose 1-phosphate</KM>
        <KM evidence="2">135.24 uM for GTP</KM>
    </kinetics>
    <phDependence>
        <text evidence="2">Optimum pH is 7.5.</text>
    </phDependence>
    <temperatureDependence>
        <text evidence="2">Optimum temperature is 37 degrees Celsius.</text>
    </temperatureDependence>
</comment>
<comment type="pathway">
    <text evidence="2">Cell wall biogenesis.</text>
</comment>
<comment type="pathway">
    <text evidence="5">Nucleotide-sugar biosynthesis; GDP-alpha-D-mannose biosynthesis; GDP-alpha-D-mannose from alpha-D-mannose 1-phosphate (GTP route): step 1/1.</text>
</comment>
<comment type="disruption phenotype">
    <text evidence="2">Essential for in vitro growth (PubMed:34644596). Knockdown of the gene decreases the cell growth and alters the integrity of cell wall and cell membrane (PubMed:34644596).</text>
</comment>
<comment type="miscellaneous">
    <text evidence="2">Could be the potential target for novel anti-tuberculosis drug.</text>
</comment>
<comment type="similarity">
    <text evidence="5">Belongs to the transferase hexapeptide repeat family.</text>
</comment>
<keyword id="KW-0961">Cell wall biogenesis/degradation</keyword>
<keyword id="KW-0342">GTP-binding</keyword>
<keyword id="KW-0547">Nucleotide-binding</keyword>
<keyword id="KW-0548">Nucleotidyltransferase</keyword>
<keyword id="KW-1185">Reference proteome</keyword>
<keyword id="KW-0808">Transferase</keyword>
<organism>
    <name type="scientific">Mycobacterium tuberculosis (strain ATCC 25618 / H37Rv)</name>
    <dbReference type="NCBI Taxonomy" id="83332"/>
    <lineage>
        <taxon>Bacteria</taxon>
        <taxon>Bacillati</taxon>
        <taxon>Actinomycetota</taxon>
        <taxon>Actinomycetes</taxon>
        <taxon>Mycobacteriales</taxon>
        <taxon>Mycobacteriaceae</taxon>
        <taxon>Mycobacterium</taxon>
        <taxon>Mycobacterium tuberculosis complex</taxon>
    </lineage>
</organism>
<sequence length="359" mass="37857">MATHQVDAVVLVGGKGTRLRPLTLSAPKPMLPTAGLPFLTHLLSRIAAAGIEHVILGTSYKPAVFEAEFGDGSALGLQIEYVTEEHPLGTGGGIANVAGKLRNDTAMVFNGDVLSGADLAQLLDFHRSNRADVTLQLVRVGDPRAFGCVPTDEEDRVVAFLEKTEDPPTDQINAGCYVFERNVIDRIPQGREVSVEREVFPALLADGDCKIYGYVDASYWRDMGTPEDFVRGSADLVRGIAPSPALRGHRGEQLVHDGAAVSPGALLIGGTVVGRGAEIGPGTRLDGAVIFDGVRVEAGCVIERSIIGFGARIGPRALIRDGVIGDGADIGARCELLSGARVWPGVFLPDGGIRYSSDV</sequence>
<evidence type="ECO:0000269" key="1">
    <source>
    </source>
</evidence>
<evidence type="ECO:0000269" key="2">
    <source>
    </source>
</evidence>
<evidence type="ECO:0000303" key="3">
    <source>
    </source>
</evidence>
<evidence type="ECO:0000303" key="4">
    <source>
    </source>
</evidence>
<evidence type="ECO:0000305" key="5"/>
<evidence type="ECO:0000312" key="6">
    <source>
        <dbReference type="EMBL" id="CCP46083.1"/>
    </source>
</evidence>
<name>GMPP_MYCTU</name>
<gene>
    <name evidence="3" type="primary">manB</name>
    <name evidence="6" type="ordered locus">Rv3264c</name>
</gene>
<feature type="chain" id="PRO_0000456573" description="Mannose-1-phosphate guanylyltransferase">
    <location>
        <begin position="1"/>
        <end position="359"/>
    </location>
</feature>
<proteinExistence type="evidence at protein level"/>
<reference key="1">
    <citation type="journal article" date="1998" name="Nature">
        <title>Deciphering the biology of Mycobacterium tuberculosis from the complete genome sequence.</title>
        <authorList>
            <person name="Cole S.T."/>
            <person name="Brosch R."/>
            <person name="Parkhill J."/>
            <person name="Garnier T."/>
            <person name="Churcher C.M."/>
            <person name="Harris D.E."/>
            <person name="Gordon S.V."/>
            <person name="Eiglmeier K."/>
            <person name="Gas S."/>
            <person name="Barry C.E. III"/>
            <person name="Tekaia F."/>
            <person name="Badcock K."/>
            <person name="Basham D."/>
            <person name="Brown D."/>
            <person name="Chillingworth T."/>
            <person name="Connor R."/>
            <person name="Davies R.M."/>
            <person name="Devlin K."/>
            <person name="Feltwell T."/>
            <person name="Gentles S."/>
            <person name="Hamlin N."/>
            <person name="Holroyd S."/>
            <person name="Hornsby T."/>
            <person name="Jagels K."/>
            <person name="Krogh A."/>
            <person name="McLean J."/>
            <person name="Moule S."/>
            <person name="Murphy L.D."/>
            <person name="Oliver S."/>
            <person name="Osborne J."/>
            <person name="Quail M.A."/>
            <person name="Rajandream M.A."/>
            <person name="Rogers J."/>
            <person name="Rutter S."/>
            <person name="Seeger K."/>
            <person name="Skelton S."/>
            <person name="Squares S."/>
            <person name="Squares R."/>
            <person name="Sulston J.E."/>
            <person name="Taylor K."/>
            <person name="Whitehead S."/>
            <person name="Barrell B.G."/>
        </authorList>
    </citation>
    <scope>NUCLEOTIDE SEQUENCE [LARGE SCALE GENOMIC DNA]</scope>
    <source>
        <strain>ATCC 25618 / H37Rv</strain>
    </source>
</reference>
<reference key="2">
    <citation type="journal article" date="2001" name="Antimicrob. Agents Chemother.">
        <title>Drug targeting Mycobacterium tuberculosis cell wall synthesis: genetics of dTDP-rhamnose synthetic enzymes and development of a microtiter plate-based screen for inhibitors of conversion of dTDP-glucose to dTDP-rhamnose.</title>
        <authorList>
            <person name="Ma Y."/>
            <person name="Stern R.J."/>
            <person name="Scherman M.S."/>
            <person name="Vissa V.D."/>
            <person name="Yan W."/>
            <person name="Jones V.C."/>
            <person name="Zhang F."/>
            <person name="Franzblau S.G."/>
            <person name="Lewis W.H."/>
            <person name="McNeil M.R."/>
        </authorList>
    </citation>
    <scope>FUNCTION</scope>
    <scope>CATALYTIC ACTIVITY</scope>
</reference>
<reference key="3">
    <citation type="journal article" date="2011" name="Mol. Cell. Proteomics">
        <title>Proteogenomic analysis of Mycobacterium tuberculosis by high resolution mass spectrometry.</title>
        <authorList>
            <person name="Kelkar D.S."/>
            <person name="Kumar D."/>
            <person name="Kumar P."/>
            <person name="Balakrishnan L."/>
            <person name="Muthusamy B."/>
            <person name="Yadav A.K."/>
            <person name="Shrivastava P."/>
            <person name="Marimuthu A."/>
            <person name="Anand S."/>
            <person name="Sundaram H."/>
            <person name="Kingsbury R."/>
            <person name="Harsha H.C."/>
            <person name="Nair B."/>
            <person name="Prasad T.S."/>
            <person name="Chauhan D.S."/>
            <person name="Katoch K."/>
            <person name="Katoch V.M."/>
            <person name="Kumar P."/>
            <person name="Chaerkady R."/>
            <person name="Ramachandran S."/>
            <person name="Dash D."/>
            <person name="Pandey A."/>
        </authorList>
    </citation>
    <scope>IDENTIFICATION BY MASS SPECTROMETRY [LARGE SCALE ANALYSIS]</scope>
</reference>
<reference key="4">
    <citation type="journal article" date="2022" name="Res. Microbiol.">
        <title>Functional analysis and enzyme characterization of mannose-1-phosphate guanylyl transferase (ManB) from Mycobacterium tuberculosis.</title>
        <authorList>
            <person name="Taj A."/>
            <person name="Jia L."/>
            <person name="Sha S."/>
            <person name="Wang C."/>
            <person name="Ullah H."/>
            <person name="Haris M."/>
            <person name="Ma X."/>
            <person name="Ma Y."/>
        </authorList>
    </citation>
    <scope>FUNCTION</scope>
    <scope>CATALYTIC ACTIVITY</scope>
    <scope>BIOPHYSICOCHEMICAL PROPERTIES</scope>
    <scope>PATHWAY</scope>
    <scope>DISRUPTION PHENOTYPE</scope>
    <scope>IDENTIFICATION AS A DRUG TARGET</scope>
    <source>
        <strain>H37Ra</strain>
        <strain>H37Rv</strain>
    </source>
</reference>
<accession>L7N6A5</accession>
<accession>I6YFM9</accession>